<name>THIE2_AQUAE</name>
<gene>
    <name type="primary">thiE2</name>
    <name type="ordered locus">aq_1366</name>
</gene>
<comment type="function">
    <text evidence="1">Condenses 4-methyl-5-(beta-hydroxyethyl)thiazole monophosphate (THZ-P) and 2-methyl-4-amino-5-hydroxymethyl pyrimidine pyrophosphate (HMP-PP) to form thiamine monophosphate (TMP).</text>
</comment>
<comment type="catalytic activity">
    <reaction>
        <text>2-[(2R,5Z)-2-carboxy-4-methylthiazol-5(2H)-ylidene]ethyl phosphate + 4-amino-2-methyl-5-(diphosphooxymethyl)pyrimidine + 2 H(+) = thiamine phosphate + CO2 + diphosphate</text>
        <dbReference type="Rhea" id="RHEA:47844"/>
        <dbReference type="ChEBI" id="CHEBI:15378"/>
        <dbReference type="ChEBI" id="CHEBI:16526"/>
        <dbReference type="ChEBI" id="CHEBI:33019"/>
        <dbReference type="ChEBI" id="CHEBI:37575"/>
        <dbReference type="ChEBI" id="CHEBI:57841"/>
        <dbReference type="ChEBI" id="CHEBI:62899"/>
        <dbReference type="EC" id="2.5.1.3"/>
    </reaction>
</comment>
<comment type="catalytic activity">
    <reaction>
        <text>2-(2-carboxy-4-methylthiazol-5-yl)ethyl phosphate + 4-amino-2-methyl-5-(diphosphooxymethyl)pyrimidine + 2 H(+) = thiamine phosphate + CO2 + diphosphate</text>
        <dbReference type="Rhea" id="RHEA:47848"/>
        <dbReference type="ChEBI" id="CHEBI:15378"/>
        <dbReference type="ChEBI" id="CHEBI:16526"/>
        <dbReference type="ChEBI" id="CHEBI:33019"/>
        <dbReference type="ChEBI" id="CHEBI:37575"/>
        <dbReference type="ChEBI" id="CHEBI:57841"/>
        <dbReference type="ChEBI" id="CHEBI:62890"/>
        <dbReference type="EC" id="2.5.1.3"/>
    </reaction>
</comment>
<comment type="catalytic activity">
    <reaction>
        <text>4-methyl-5-(2-phosphooxyethyl)-thiazole + 4-amino-2-methyl-5-(diphosphooxymethyl)pyrimidine + H(+) = thiamine phosphate + diphosphate</text>
        <dbReference type="Rhea" id="RHEA:22328"/>
        <dbReference type="ChEBI" id="CHEBI:15378"/>
        <dbReference type="ChEBI" id="CHEBI:33019"/>
        <dbReference type="ChEBI" id="CHEBI:37575"/>
        <dbReference type="ChEBI" id="CHEBI:57841"/>
        <dbReference type="ChEBI" id="CHEBI:58296"/>
        <dbReference type="EC" id="2.5.1.3"/>
    </reaction>
</comment>
<comment type="cofactor">
    <cofactor evidence="1">
        <name>Mg(2+)</name>
        <dbReference type="ChEBI" id="CHEBI:18420"/>
    </cofactor>
    <text evidence="1">Binds 1 Mg(2+) ion per subunit.</text>
</comment>
<comment type="pathway">
    <text>Cofactor biosynthesis; thiamine diphosphate biosynthesis; thiamine phosphate from 4-amino-2-methyl-5-diphosphomethylpyrimidine and 4-methyl-5-(2-phosphoethyl)-thiazole: step 1/1.</text>
</comment>
<comment type="similarity">
    <text evidence="2">Belongs to the thiamine-phosphate synthase family.</text>
</comment>
<keyword id="KW-0460">Magnesium</keyword>
<keyword id="KW-0479">Metal-binding</keyword>
<keyword id="KW-1185">Reference proteome</keyword>
<keyword id="KW-0784">Thiamine biosynthesis</keyword>
<keyword id="KW-0808">Transferase</keyword>
<feature type="chain" id="PRO_0000157088" description="Putative thiamine-phosphate synthase 2">
    <location>
        <begin position="1"/>
        <end position="186"/>
    </location>
</feature>
<feature type="binding site" evidence="1">
    <location>
        <begin position="35"/>
        <end position="39"/>
    </location>
    <ligand>
        <name>4-amino-2-methyl-5-(diphosphooxymethyl)pyrimidine</name>
        <dbReference type="ChEBI" id="CHEBI:57841"/>
    </ligand>
</feature>
<feature type="binding site" evidence="1">
    <location>
        <position position="67"/>
    </location>
    <ligand>
        <name>4-amino-2-methyl-5-(diphosphooxymethyl)pyrimidine</name>
        <dbReference type="ChEBI" id="CHEBI:57841"/>
    </ligand>
</feature>
<feature type="binding site" evidence="1">
    <location>
        <position position="68"/>
    </location>
    <ligand>
        <name>Mg(2+)</name>
        <dbReference type="ChEBI" id="CHEBI:18420"/>
    </ligand>
</feature>
<feature type="binding site" evidence="1">
    <location>
        <position position="105"/>
    </location>
    <ligand>
        <name>4-amino-2-methyl-5-(diphosphooxymethyl)pyrimidine</name>
        <dbReference type="ChEBI" id="CHEBI:57841"/>
    </ligand>
</feature>
<feature type="binding site" evidence="1">
    <location>
        <begin position="131"/>
        <end position="133"/>
    </location>
    <ligand>
        <name>2-[(2R,5Z)-2-carboxy-4-methylthiazol-5(2H)-ylidene]ethyl phosphate</name>
        <dbReference type="ChEBI" id="CHEBI:62899"/>
    </ligand>
</feature>
<feature type="binding site" evidence="1">
    <location>
        <position position="134"/>
    </location>
    <ligand>
        <name>4-amino-2-methyl-5-(diphosphooxymethyl)pyrimidine</name>
        <dbReference type="ChEBI" id="CHEBI:57841"/>
    </ligand>
</feature>
<feature type="binding site" evidence="1">
    <location>
        <position position="161"/>
    </location>
    <ligand>
        <name>2-[(2R,5Z)-2-carboxy-4-methylthiazol-5(2H)-ylidene]ethyl phosphate</name>
        <dbReference type="ChEBI" id="CHEBI:62899"/>
    </ligand>
</feature>
<feature type="binding site" evidence="1">
    <location>
        <begin position="181"/>
        <end position="182"/>
    </location>
    <ligand>
        <name>2-[(2R,5Z)-2-carboxy-4-methylthiazol-5(2H)-ylidene]ethyl phosphate</name>
        <dbReference type="ChEBI" id="CHEBI:62899"/>
    </ligand>
</feature>
<proteinExistence type="inferred from homology"/>
<protein>
    <recommendedName>
        <fullName>Putative thiamine-phosphate synthase 2</fullName>
        <shortName>TP synthase 2</shortName>
        <shortName>TPS 2</shortName>
        <ecNumber>2.5.1.3</ecNumber>
    </recommendedName>
    <alternativeName>
        <fullName>Thiamine-phosphate pyrophosphorylase 2</fullName>
        <shortName>TMP pyrophosphorylase 2</shortName>
        <shortName>TMP-PPase 2</shortName>
    </alternativeName>
</protein>
<organism>
    <name type="scientific">Aquifex aeolicus (strain VF5)</name>
    <dbReference type="NCBI Taxonomy" id="224324"/>
    <lineage>
        <taxon>Bacteria</taxon>
        <taxon>Pseudomonadati</taxon>
        <taxon>Aquificota</taxon>
        <taxon>Aquificia</taxon>
        <taxon>Aquificales</taxon>
        <taxon>Aquificaceae</taxon>
        <taxon>Aquifex</taxon>
    </lineage>
</organism>
<accession>O67378</accession>
<reference key="1">
    <citation type="journal article" date="1998" name="Nature">
        <title>The complete genome of the hyperthermophilic bacterium Aquifex aeolicus.</title>
        <authorList>
            <person name="Deckert G."/>
            <person name="Warren P.V."/>
            <person name="Gaasterland T."/>
            <person name="Young W.G."/>
            <person name="Lenox A.L."/>
            <person name="Graham D.E."/>
            <person name="Overbeek R."/>
            <person name="Snead M.A."/>
            <person name="Keller M."/>
            <person name="Aujay M."/>
            <person name="Huber R."/>
            <person name="Feldman R.A."/>
            <person name="Short J.M."/>
            <person name="Olsen G.J."/>
            <person name="Swanson R.V."/>
        </authorList>
    </citation>
    <scope>NUCLEOTIDE SEQUENCE [LARGE SCALE GENOMIC DNA]</scope>
    <source>
        <strain>VF5</strain>
    </source>
</reference>
<evidence type="ECO:0000250" key="1"/>
<evidence type="ECO:0000305" key="2"/>
<dbReference type="EC" id="2.5.1.3"/>
<dbReference type="EMBL" id="AE000657">
    <property type="protein sequence ID" value="AAC07326.1"/>
    <property type="molecule type" value="Genomic_DNA"/>
</dbReference>
<dbReference type="PIR" id="G70418">
    <property type="entry name" value="G70418"/>
</dbReference>
<dbReference type="RefSeq" id="NP_213942.1">
    <property type="nucleotide sequence ID" value="NC_000918.1"/>
</dbReference>
<dbReference type="RefSeq" id="WP_010880880.1">
    <property type="nucleotide sequence ID" value="NC_000918.1"/>
</dbReference>
<dbReference type="SMR" id="O67378"/>
<dbReference type="FunCoup" id="O67378">
    <property type="interactions" value="366"/>
</dbReference>
<dbReference type="STRING" id="224324.aq_1366"/>
<dbReference type="EnsemblBacteria" id="AAC07326">
    <property type="protein sequence ID" value="AAC07326"/>
    <property type="gene ID" value="aq_1366"/>
</dbReference>
<dbReference type="KEGG" id="aae:aq_1366"/>
<dbReference type="PATRIC" id="fig|224324.8.peg.1069"/>
<dbReference type="eggNOG" id="COG0352">
    <property type="taxonomic scope" value="Bacteria"/>
</dbReference>
<dbReference type="HOGENOM" id="CLU_018272_3_2_0"/>
<dbReference type="InParanoid" id="O67378"/>
<dbReference type="OrthoDB" id="9815348at2"/>
<dbReference type="UniPathway" id="UPA00060">
    <property type="reaction ID" value="UER00141"/>
</dbReference>
<dbReference type="Proteomes" id="UP000000798">
    <property type="component" value="Chromosome"/>
</dbReference>
<dbReference type="GO" id="GO:0005737">
    <property type="term" value="C:cytoplasm"/>
    <property type="evidence" value="ECO:0000318"/>
    <property type="project" value="GO_Central"/>
</dbReference>
<dbReference type="GO" id="GO:0000287">
    <property type="term" value="F:magnesium ion binding"/>
    <property type="evidence" value="ECO:0007669"/>
    <property type="project" value="UniProtKB-UniRule"/>
</dbReference>
<dbReference type="GO" id="GO:0004789">
    <property type="term" value="F:thiamine-phosphate diphosphorylase activity"/>
    <property type="evidence" value="ECO:0000318"/>
    <property type="project" value="GO_Central"/>
</dbReference>
<dbReference type="GO" id="GO:0009228">
    <property type="term" value="P:thiamine biosynthetic process"/>
    <property type="evidence" value="ECO:0000318"/>
    <property type="project" value="GO_Central"/>
</dbReference>
<dbReference type="GO" id="GO:0009229">
    <property type="term" value="P:thiamine diphosphate biosynthetic process"/>
    <property type="evidence" value="ECO:0007669"/>
    <property type="project" value="UniProtKB-UniRule"/>
</dbReference>
<dbReference type="CDD" id="cd00564">
    <property type="entry name" value="TMP_TenI"/>
    <property type="match status" value="1"/>
</dbReference>
<dbReference type="FunFam" id="3.20.20.70:FF:000096">
    <property type="entry name" value="Thiamine-phosphate synthase"/>
    <property type="match status" value="1"/>
</dbReference>
<dbReference type="Gene3D" id="3.20.20.70">
    <property type="entry name" value="Aldolase class I"/>
    <property type="match status" value="1"/>
</dbReference>
<dbReference type="InterPro" id="IPR013785">
    <property type="entry name" value="Aldolase_TIM"/>
</dbReference>
<dbReference type="InterPro" id="IPR036206">
    <property type="entry name" value="ThiamineP_synth_sf"/>
</dbReference>
<dbReference type="InterPro" id="IPR022998">
    <property type="entry name" value="ThiamineP_synth_TenI"/>
</dbReference>
<dbReference type="InterPro" id="IPR034291">
    <property type="entry name" value="TMP_synthase"/>
</dbReference>
<dbReference type="NCBIfam" id="TIGR00693">
    <property type="entry name" value="thiE"/>
    <property type="match status" value="1"/>
</dbReference>
<dbReference type="PANTHER" id="PTHR20857">
    <property type="entry name" value="THIAMINE-PHOSPHATE PYROPHOSPHORYLASE"/>
    <property type="match status" value="1"/>
</dbReference>
<dbReference type="PANTHER" id="PTHR20857:SF15">
    <property type="entry name" value="THIAMINE-PHOSPHATE SYNTHASE"/>
    <property type="match status" value="1"/>
</dbReference>
<dbReference type="Pfam" id="PF02581">
    <property type="entry name" value="TMP-TENI"/>
    <property type="match status" value="1"/>
</dbReference>
<dbReference type="SUPFAM" id="SSF51391">
    <property type="entry name" value="Thiamin phosphate synthase"/>
    <property type="match status" value="1"/>
</dbReference>
<sequence>MELPRLYAITDRKKYGENFLETLEKILKKGVRMVQLREKDLKDRELYKLAKEVRALTKKYKALLLINERFDIALAVEADGVHLPEQSFPPSVVKRVNPNFIVGFSAHSLESAKYAEKEGADFITLSPIFKTSSHPEAQPIGLKTLKEVSEKVNIPVYALGGITWEKIKVCYKNGAYGIAGISMFLE</sequence>